<dbReference type="EMBL" id="CP000855">
    <property type="protein sequence ID" value="ACJ15566.1"/>
    <property type="molecule type" value="Genomic_DNA"/>
</dbReference>
<dbReference type="RefSeq" id="WP_012571039.1">
    <property type="nucleotide sequence ID" value="NC_011529.1"/>
</dbReference>
<dbReference type="SMR" id="B6YSM9"/>
<dbReference type="STRING" id="523850.TON_0081"/>
<dbReference type="GeneID" id="28495796"/>
<dbReference type="GeneID" id="7017728"/>
<dbReference type="KEGG" id="ton:TON_0081"/>
<dbReference type="PATRIC" id="fig|523850.10.peg.81"/>
<dbReference type="eggNOG" id="arCOG04091">
    <property type="taxonomic scope" value="Archaea"/>
</dbReference>
<dbReference type="HOGENOM" id="CLU_098428_1_1_2"/>
<dbReference type="OrthoDB" id="5670at2157"/>
<dbReference type="Proteomes" id="UP000002727">
    <property type="component" value="Chromosome"/>
</dbReference>
<dbReference type="GO" id="GO:1990904">
    <property type="term" value="C:ribonucleoprotein complex"/>
    <property type="evidence" value="ECO:0007669"/>
    <property type="project" value="UniProtKB-KW"/>
</dbReference>
<dbReference type="GO" id="GO:0005840">
    <property type="term" value="C:ribosome"/>
    <property type="evidence" value="ECO:0007669"/>
    <property type="project" value="UniProtKB-KW"/>
</dbReference>
<dbReference type="GO" id="GO:0019843">
    <property type="term" value="F:rRNA binding"/>
    <property type="evidence" value="ECO:0007669"/>
    <property type="project" value="UniProtKB-UniRule"/>
</dbReference>
<dbReference type="GO" id="GO:0003735">
    <property type="term" value="F:structural constituent of ribosome"/>
    <property type="evidence" value="ECO:0007669"/>
    <property type="project" value="InterPro"/>
</dbReference>
<dbReference type="GO" id="GO:0006412">
    <property type="term" value="P:translation"/>
    <property type="evidence" value="ECO:0007669"/>
    <property type="project" value="UniProtKB-UniRule"/>
</dbReference>
<dbReference type="FunFam" id="3.30.1370.30:FF:000001">
    <property type="entry name" value="40S ribosomal protein S15a"/>
    <property type="match status" value="1"/>
</dbReference>
<dbReference type="FunFam" id="3.30.1490.10:FF:000002">
    <property type="entry name" value="40S ribosomal protein S15a"/>
    <property type="match status" value="1"/>
</dbReference>
<dbReference type="Gene3D" id="3.30.1370.30">
    <property type="match status" value="1"/>
</dbReference>
<dbReference type="Gene3D" id="3.30.1490.10">
    <property type="match status" value="1"/>
</dbReference>
<dbReference type="HAMAP" id="MF_01302_A">
    <property type="entry name" value="Ribosomal_uS8_A"/>
    <property type="match status" value="1"/>
</dbReference>
<dbReference type="InterPro" id="IPR000630">
    <property type="entry name" value="Ribosomal_uS8"/>
</dbReference>
<dbReference type="InterPro" id="IPR047863">
    <property type="entry name" value="Ribosomal_uS8_CS"/>
</dbReference>
<dbReference type="InterPro" id="IPR035987">
    <property type="entry name" value="Ribosomal_uS8_sf"/>
</dbReference>
<dbReference type="NCBIfam" id="NF003115">
    <property type="entry name" value="PRK04034.1"/>
    <property type="match status" value="1"/>
</dbReference>
<dbReference type="PANTHER" id="PTHR11758">
    <property type="entry name" value="40S RIBOSOMAL PROTEIN S15A"/>
    <property type="match status" value="1"/>
</dbReference>
<dbReference type="Pfam" id="PF00410">
    <property type="entry name" value="Ribosomal_S8"/>
    <property type="match status" value="1"/>
</dbReference>
<dbReference type="SUPFAM" id="SSF56047">
    <property type="entry name" value="Ribosomal protein S8"/>
    <property type="match status" value="1"/>
</dbReference>
<dbReference type="PROSITE" id="PS00053">
    <property type="entry name" value="RIBOSOMAL_S8"/>
    <property type="match status" value="1"/>
</dbReference>
<evidence type="ECO:0000255" key="1">
    <source>
        <dbReference type="HAMAP-Rule" id="MF_01302"/>
    </source>
</evidence>
<evidence type="ECO:0000305" key="2"/>
<gene>
    <name evidence="1" type="primary">rps8</name>
    <name type="ordered locus">TON_0081</name>
</gene>
<organism>
    <name type="scientific">Thermococcus onnurineus (strain NA1)</name>
    <dbReference type="NCBI Taxonomy" id="523850"/>
    <lineage>
        <taxon>Archaea</taxon>
        <taxon>Methanobacteriati</taxon>
        <taxon>Methanobacteriota</taxon>
        <taxon>Thermococci</taxon>
        <taxon>Thermococcales</taxon>
        <taxon>Thermococcaceae</taxon>
        <taxon>Thermococcus</taxon>
    </lineage>
</organism>
<comment type="function">
    <text evidence="1">One of the primary rRNA binding proteins, it binds directly to 16S rRNA central domain where it helps coordinate assembly of the platform of the 30S subunit.</text>
</comment>
<comment type="subunit">
    <text evidence="1">Part of the 30S ribosomal subunit.</text>
</comment>
<comment type="similarity">
    <text evidence="1">Belongs to the universal ribosomal protein uS8 family.</text>
</comment>
<proteinExistence type="inferred from homology"/>
<name>RS8_THEON</name>
<keyword id="KW-0687">Ribonucleoprotein</keyword>
<keyword id="KW-0689">Ribosomal protein</keyword>
<keyword id="KW-0694">RNA-binding</keyword>
<keyword id="KW-0699">rRNA-binding</keyword>
<reference key="1">
    <citation type="journal article" date="2008" name="J. Bacteriol.">
        <title>The complete genome sequence of Thermococcus onnurineus NA1 reveals a mixed heterotrophic and carboxydotrophic metabolism.</title>
        <authorList>
            <person name="Lee H.S."/>
            <person name="Kang S.G."/>
            <person name="Bae S.S."/>
            <person name="Lim J.K."/>
            <person name="Cho Y."/>
            <person name="Kim Y.J."/>
            <person name="Jeon J.H."/>
            <person name="Cha S.-S."/>
            <person name="Kwon K.K."/>
            <person name="Kim H.-T."/>
            <person name="Park C.-J."/>
            <person name="Lee H.-W."/>
            <person name="Kim S.I."/>
            <person name="Chun J."/>
            <person name="Colwell R.R."/>
            <person name="Kim S.-J."/>
            <person name="Lee J.-H."/>
        </authorList>
    </citation>
    <scope>NUCLEOTIDE SEQUENCE [LARGE SCALE GENOMIC DNA]</scope>
    <source>
        <strain>NA1</strain>
    </source>
</reference>
<protein>
    <recommendedName>
        <fullName evidence="1">Small ribosomal subunit protein uS8</fullName>
    </recommendedName>
    <alternativeName>
        <fullName evidence="2">30S ribosomal protein S8</fullName>
    </alternativeName>
</protein>
<sequence>MTLLDPLANALSHITNSERVGKKEVYIKPASKLIGEVLRVMQENGYIGEFEFIDDGRAGIYRVQLIGKINKAGAIKPRFPVKAREYEAWEKRFLPAFEFGILIVSTSQGVMTHKEAIEKGIGGRLIAYVY</sequence>
<accession>B6YSM9</accession>
<feature type="chain" id="PRO_1000140627" description="Small ribosomal subunit protein uS8">
    <location>
        <begin position="1"/>
        <end position="130"/>
    </location>
</feature>